<organism>
    <name type="scientific">Arabidopsis thaliana</name>
    <name type="common">Mouse-ear cress</name>
    <dbReference type="NCBI Taxonomy" id="3702"/>
    <lineage>
        <taxon>Eukaryota</taxon>
        <taxon>Viridiplantae</taxon>
        <taxon>Streptophyta</taxon>
        <taxon>Embryophyta</taxon>
        <taxon>Tracheophyta</taxon>
        <taxon>Spermatophyta</taxon>
        <taxon>Magnoliopsida</taxon>
        <taxon>eudicotyledons</taxon>
        <taxon>Gunneridae</taxon>
        <taxon>Pentapetalae</taxon>
        <taxon>rosids</taxon>
        <taxon>malvids</taxon>
        <taxon>Brassicales</taxon>
        <taxon>Brassicaceae</taxon>
        <taxon>Camelineae</taxon>
        <taxon>Arabidopsis</taxon>
    </lineage>
</organism>
<sequence>MVAGKVRVTMGFHKSPSTKKTKDMPSPLPLPPPPPPPLKPPSSGSATTKPPINPSKPGFTRSFGVYFPRASAQVHATAAAASHNGVVSELRRQVEELREREALLKTENLEVKLLRESVSVIPLLESQIADKNGEIDELRKETARLAEDNERLRREFDRSEEMRRECETREKEMEAEIVELRKLVSSESDDHALSVSQRFQGLMDVSAKSNLIRSLKRVGSLRNLPEPITNQENTNKSISSSGDADGDIYRKDEIESYSRSSNSEELTESSSLSTVRSRVPRVPKPPPKRSISLGDSTENRADPPPQKSIPPPPPPPPPPLLQQPPPPPSVSKAPPPPPPPPPPKSLSIASAKVRRVPEVVEFYHSLMRRDSTNSRRDSTGGGNAAAEAILANSNARDMIGEIENRSVYLLAIKTDVETQGDFIRFLIKEVGNAAFSDIEDVVPFVKWLDDELSYLVDERAVLKHFEWPEQKADALREAAFCYFDLKKLISEASRFREDPRQSSSSALKKMQALFEKLEHGVYSLSRMRESAATKFKSFQIPVDWMLETGITSQIKLASVKLAMKYMKRVSAELEAIEGGGPEEEELIVQGVRFAFRVHQFAGGFDAETMKAFEELRDKARSCHVQCQSQTHQHKLCFRSTPC</sequence>
<protein>
    <recommendedName>
        <fullName evidence="6">Protein INCREASED PETAL GROWTH ANISOTROPY 1</fullName>
    </recommendedName>
</protein>
<name>IPGA1_ARATH</name>
<feature type="chain" id="PRO_0000458666" description="Protein INCREASED PETAL GROWTH ANISOTROPY 1">
    <location>
        <begin position="1"/>
        <end position="642"/>
    </location>
</feature>
<feature type="region of interest" description="Disordered" evidence="2">
    <location>
        <begin position="1"/>
        <end position="60"/>
    </location>
</feature>
<feature type="region of interest" description="Disordered" evidence="2">
    <location>
        <begin position="223"/>
        <end position="351"/>
    </location>
</feature>
<feature type="coiled-coil region" evidence="1">
    <location>
        <begin position="80"/>
        <end position="183"/>
    </location>
</feature>
<feature type="compositionally biased region" description="Pro residues" evidence="2">
    <location>
        <begin position="26"/>
        <end position="40"/>
    </location>
</feature>
<feature type="compositionally biased region" description="Basic and acidic residues" evidence="2">
    <location>
        <begin position="247"/>
        <end position="256"/>
    </location>
</feature>
<feature type="compositionally biased region" description="Low complexity" evidence="2">
    <location>
        <begin position="258"/>
        <end position="277"/>
    </location>
</feature>
<feature type="compositionally biased region" description="Pro residues" evidence="2">
    <location>
        <begin position="302"/>
        <end position="344"/>
    </location>
</feature>
<reference key="1">
    <citation type="journal article" date="1999" name="Nature">
        <title>Sequence and analysis of chromosome 4 of the plant Arabidopsis thaliana.</title>
        <authorList>
            <person name="Mayer K.F.X."/>
            <person name="Schueller C."/>
            <person name="Wambutt R."/>
            <person name="Murphy G."/>
            <person name="Volckaert G."/>
            <person name="Pohl T."/>
            <person name="Duesterhoeft A."/>
            <person name="Stiekema W."/>
            <person name="Entian K.-D."/>
            <person name="Terryn N."/>
            <person name="Harris B."/>
            <person name="Ansorge W."/>
            <person name="Brandt P."/>
            <person name="Grivell L.A."/>
            <person name="Rieger M."/>
            <person name="Weichselgartner M."/>
            <person name="de Simone V."/>
            <person name="Obermaier B."/>
            <person name="Mache R."/>
            <person name="Mueller M."/>
            <person name="Kreis M."/>
            <person name="Delseny M."/>
            <person name="Puigdomenech P."/>
            <person name="Watson M."/>
            <person name="Schmidtheini T."/>
            <person name="Reichert B."/>
            <person name="Portetelle D."/>
            <person name="Perez-Alonso M."/>
            <person name="Boutry M."/>
            <person name="Bancroft I."/>
            <person name="Vos P."/>
            <person name="Hoheisel J."/>
            <person name="Zimmermann W."/>
            <person name="Wedler H."/>
            <person name="Ridley P."/>
            <person name="Langham S.-A."/>
            <person name="McCullagh B."/>
            <person name="Bilham L."/>
            <person name="Robben J."/>
            <person name="van der Schueren J."/>
            <person name="Grymonprez B."/>
            <person name="Chuang Y.-J."/>
            <person name="Vandenbussche F."/>
            <person name="Braeken M."/>
            <person name="Weltjens I."/>
            <person name="Voet M."/>
            <person name="Bastiaens I."/>
            <person name="Aert R."/>
            <person name="Defoor E."/>
            <person name="Weitzenegger T."/>
            <person name="Bothe G."/>
            <person name="Ramsperger U."/>
            <person name="Hilbert H."/>
            <person name="Braun M."/>
            <person name="Holzer E."/>
            <person name="Brandt A."/>
            <person name="Peters S."/>
            <person name="van Staveren M."/>
            <person name="Dirkse W."/>
            <person name="Mooijman P."/>
            <person name="Klein Lankhorst R."/>
            <person name="Rose M."/>
            <person name="Hauf J."/>
            <person name="Koetter P."/>
            <person name="Berneiser S."/>
            <person name="Hempel S."/>
            <person name="Feldpausch M."/>
            <person name="Lamberth S."/>
            <person name="Van den Daele H."/>
            <person name="De Keyser A."/>
            <person name="Buysshaert C."/>
            <person name="Gielen J."/>
            <person name="Villarroel R."/>
            <person name="De Clercq R."/>
            <person name="van Montagu M."/>
            <person name="Rogers J."/>
            <person name="Cronin A."/>
            <person name="Quail M.A."/>
            <person name="Bray-Allen S."/>
            <person name="Clark L."/>
            <person name="Doggett J."/>
            <person name="Hall S."/>
            <person name="Kay M."/>
            <person name="Lennard N."/>
            <person name="McLay K."/>
            <person name="Mayes R."/>
            <person name="Pettett A."/>
            <person name="Rajandream M.A."/>
            <person name="Lyne M."/>
            <person name="Benes V."/>
            <person name="Rechmann S."/>
            <person name="Borkova D."/>
            <person name="Bloecker H."/>
            <person name="Scharfe M."/>
            <person name="Grimm M."/>
            <person name="Loehnert T.-H."/>
            <person name="Dose S."/>
            <person name="de Haan M."/>
            <person name="Maarse A.C."/>
            <person name="Schaefer M."/>
            <person name="Mueller-Auer S."/>
            <person name="Gabel C."/>
            <person name="Fuchs M."/>
            <person name="Fartmann B."/>
            <person name="Granderath K."/>
            <person name="Dauner D."/>
            <person name="Herzl A."/>
            <person name="Neumann S."/>
            <person name="Argiriou A."/>
            <person name="Vitale D."/>
            <person name="Liguori R."/>
            <person name="Piravandi E."/>
            <person name="Massenet O."/>
            <person name="Quigley F."/>
            <person name="Clabauld G."/>
            <person name="Muendlein A."/>
            <person name="Felber R."/>
            <person name="Schnabl S."/>
            <person name="Hiller R."/>
            <person name="Schmidt W."/>
            <person name="Lecharny A."/>
            <person name="Aubourg S."/>
            <person name="Chefdor F."/>
            <person name="Cooke R."/>
            <person name="Berger C."/>
            <person name="Monfort A."/>
            <person name="Casacuberta E."/>
            <person name="Gibbons T."/>
            <person name="Weber N."/>
            <person name="Vandenbol M."/>
            <person name="Bargues M."/>
            <person name="Terol J."/>
            <person name="Torres A."/>
            <person name="Perez-Perez A."/>
            <person name="Purnelle B."/>
            <person name="Bent E."/>
            <person name="Johnson S."/>
            <person name="Tacon D."/>
            <person name="Jesse T."/>
            <person name="Heijnen L."/>
            <person name="Schwarz S."/>
            <person name="Scholler P."/>
            <person name="Heber S."/>
            <person name="Francs P."/>
            <person name="Bielke C."/>
            <person name="Frishman D."/>
            <person name="Haase D."/>
            <person name="Lemcke K."/>
            <person name="Mewes H.-W."/>
            <person name="Stocker S."/>
            <person name="Zaccaria P."/>
            <person name="Bevan M."/>
            <person name="Wilson R.K."/>
            <person name="de la Bastide M."/>
            <person name="Habermann K."/>
            <person name="Parnell L."/>
            <person name="Dedhia N."/>
            <person name="Gnoj L."/>
            <person name="Schutz K."/>
            <person name="Huang E."/>
            <person name="Spiegel L."/>
            <person name="Sekhon M."/>
            <person name="Murray J."/>
            <person name="Sheet P."/>
            <person name="Cordes M."/>
            <person name="Abu-Threideh J."/>
            <person name="Stoneking T."/>
            <person name="Kalicki J."/>
            <person name="Graves T."/>
            <person name="Harmon G."/>
            <person name="Edwards J."/>
            <person name="Latreille P."/>
            <person name="Courtney L."/>
            <person name="Cloud J."/>
            <person name="Abbott A."/>
            <person name="Scott K."/>
            <person name="Johnson D."/>
            <person name="Minx P."/>
            <person name="Bentley D."/>
            <person name="Fulton B."/>
            <person name="Miller N."/>
            <person name="Greco T."/>
            <person name="Kemp K."/>
            <person name="Kramer J."/>
            <person name="Fulton L."/>
            <person name="Mardis E."/>
            <person name="Dante M."/>
            <person name="Pepin K."/>
            <person name="Hillier L.W."/>
            <person name="Nelson J."/>
            <person name="Spieth J."/>
            <person name="Ryan E."/>
            <person name="Andrews S."/>
            <person name="Geisel C."/>
            <person name="Layman D."/>
            <person name="Du H."/>
            <person name="Ali J."/>
            <person name="Berghoff A."/>
            <person name="Jones K."/>
            <person name="Drone K."/>
            <person name="Cotton M."/>
            <person name="Joshu C."/>
            <person name="Antonoiu B."/>
            <person name="Zidanic M."/>
            <person name="Strong C."/>
            <person name="Sun H."/>
            <person name="Lamar B."/>
            <person name="Yordan C."/>
            <person name="Ma P."/>
            <person name="Zhong J."/>
            <person name="Preston R."/>
            <person name="Vil D."/>
            <person name="Shekher M."/>
            <person name="Matero A."/>
            <person name="Shah R."/>
            <person name="Swaby I.K."/>
            <person name="O'Shaughnessy A."/>
            <person name="Rodriguez M."/>
            <person name="Hoffman J."/>
            <person name="Till S."/>
            <person name="Granat S."/>
            <person name="Shohdy N."/>
            <person name="Hasegawa A."/>
            <person name="Hameed A."/>
            <person name="Lodhi M."/>
            <person name="Johnson A."/>
            <person name="Chen E."/>
            <person name="Marra M.A."/>
            <person name="Martienssen R."/>
            <person name="McCombie W.R."/>
        </authorList>
    </citation>
    <scope>NUCLEOTIDE SEQUENCE [LARGE SCALE GENOMIC DNA]</scope>
    <source>
        <strain>cv. Columbia</strain>
    </source>
</reference>
<reference key="2">
    <citation type="journal article" date="2017" name="Plant J.">
        <title>Araport11: a complete reannotation of the Arabidopsis thaliana reference genome.</title>
        <authorList>
            <person name="Cheng C.Y."/>
            <person name="Krishnakumar V."/>
            <person name="Chan A.P."/>
            <person name="Thibaud-Nissen F."/>
            <person name="Schobel S."/>
            <person name="Town C.D."/>
        </authorList>
    </citation>
    <scope>GENOME REANNOTATION</scope>
    <source>
        <strain>cv. Columbia</strain>
    </source>
</reference>
<reference key="3">
    <citation type="journal article" date="2003" name="Science">
        <title>Empirical analysis of transcriptional activity in the Arabidopsis genome.</title>
        <authorList>
            <person name="Yamada K."/>
            <person name="Lim J."/>
            <person name="Dale J.M."/>
            <person name="Chen H."/>
            <person name="Shinn P."/>
            <person name="Palm C.J."/>
            <person name="Southwick A.M."/>
            <person name="Wu H.C."/>
            <person name="Kim C.J."/>
            <person name="Nguyen M."/>
            <person name="Pham P.K."/>
            <person name="Cheuk R.F."/>
            <person name="Karlin-Newmann G."/>
            <person name="Liu S.X."/>
            <person name="Lam B."/>
            <person name="Sakano H."/>
            <person name="Wu T."/>
            <person name="Yu G."/>
            <person name="Miranda M."/>
            <person name="Quach H.L."/>
            <person name="Tripp M."/>
            <person name="Chang C.H."/>
            <person name="Lee J.M."/>
            <person name="Toriumi M.J."/>
            <person name="Chan M.M."/>
            <person name="Tang C.C."/>
            <person name="Onodera C.S."/>
            <person name="Deng J.M."/>
            <person name="Akiyama K."/>
            <person name="Ansari Y."/>
            <person name="Arakawa T."/>
            <person name="Banh J."/>
            <person name="Banno F."/>
            <person name="Bowser L."/>
            <person name="Brooks S.Y."/>
            <person name="Carninci P."/>
            <person name="Chao Q."/>
            <person name="Choy N."/>
            <person name="Enju A."/>
            <person name="Goldsmith A.D."/>
            <person name="Gurjal M."/>
            <person name="Hansen N.F."/>
            <person name="Hayashizaki Y."/>
            <person name="Johnson-Hopson C."/>
            <person name="Hsuan V.W."/>
            <person name="Iida K."/>
            <person name="Karnes M."/>
            <person name="Khan S."/>
            <person name="Koesema E."/>
            <person name="Ishida J."/>
            <person name="Jiang P.X."/>
            <person name="Jones T."/>
            <person name="Kawai J."/>
            <person name="Kamiya A."/>
            <person name="Meyers C."/>
            <person name="Nakajima M."/>
            <person name="Narusaka M."/>
            <person name="Seki M."/>
            <person name="Sakurai T."/>
            <person name="Satou M."/>
            <person name="Tamse R."/>
            <person name="Vaysberg M."/>
            <person name="Wallender E.K."/>
            <person name="Wong C."/>
            <person name="Yamamura Y."/>
            <person name="Yuan S."/>
            <person name="Shinozaki K."/>
            <person name="Davis R.W."/>
            <person name="Theologis A."/>
            <person name="Ecker J.R."/>
        </authorList>
    </citation>
    <scope>NUCLEOTIDE SEQUENCE [LARGE SCALE MRNA]</scope>
    <source>
        <strain>cv. Columbia</strain>
    </source>
</reference>
<reference key="4">
    <citation type="journal article" date="2019" name="J. Exp. Bot.">
        <title>Arabidopsis IPGA1 is a microtubule-associated protein essential for cell expansion during petal morphogenesis.</title>
        <authorList>
            <person name="Yang Y."/>
            <person name="Chen B."/>
            <person name="Dang X."/>
            <person name="Zhu L."/>
            <person name="Rao J."/>
            <person name="Ren H."/>
            <person name="Lin C."/>
            <person name="Qin Y."/>
            <person name="Lin D."/>
        </authorList>
    </citation>
    <scope>FUNCTION</scope>
    <scope>DISRUPTION PHENOTYPE</scope>
    <scope>INTERACTION WITH MICROTUBULES</scope>
    <scope>SUBCELLULAR LOCATION</scope>
    <scope>TISSUE SPECIFICITY</scope>
    <scope>DEVELOPMENTAL STAGE</scope>
    <source>
        <strain>cv. Columbia</strain>
    </source>
</reference>
<reference key="5">
    <citation type="journal article" date="2019" name="Int. J. Mol. Sci.">
        <title>Cortical microtubule organization during petal morphogenesis in Arabidopsis.</title>
        <authorList>
            <person name="Yang Y."/>
            <person name="Huang W."/>
            <person name="Wu E."/>
            <person name="Lin C."/>
            <person name="Chen B."/>
            <person name="Lin D."/>
        </authorList>
    </citation>
    <scope>FUNCTION</scope>
    <scope>DISRUPTION PHENOTYPE</scope>
    <scope>REVIEW ON ANISOTROPIC PETAL GROWTH</scope>
</reference>
<reference key="6">
    <citation type="journal article" date="2022" name="New Phytol.">
        <title>The IPGA1-ANGUSTIFOLIA module regulates microtubule organisation and pavement cell shape in Arabidopsis.</title>
        <authorList>
            <person name="Chen B."/>
            <person name="Dang X."/>
            <person name="Bai W."/>
            <person name="Liu M."/>
            <person name="Li Y."/>
            <person name="Zhu L."/>
            <person name="Yang Y."/>
            <person name="Yu P."/>
            <person name="Ren H."/>
            <person name="Huang D."/>
            <person name="Pan X."/>
            <person name="Wang H."/>
            <person name="Qin Y."/>
            <person name="Feng S."/>
            <person name="Wang Q."/>
            <person name="Lin D."/>
        </authorList>
    </citation>
    <scope>FUNCTION</scope>
    <scope>DISRUPTION PHENOTYPE</scope>
    <scope>INTERACTION WITH AN AND KTN1</scope>
    <scope>SUBCELLULAR LOCATION</scope>
    <source>
        <strain>cv. Columbia</strain>
    </source>
</reference>
<gene>
    <name evidence="6" type="primary">IPGA1</name>
    <name evidence="8" type="ordered locus">At4g18570</name>
    <name evidence="9" type="ORF">F28J12.220</name>
</gene>
<comment type="function">
    <text evidence="3 4 5">Microtubule-associated protein involved in the regulation of anisotropic petal and cotyledons growth and shape by affecting cortical microtubule organization (PubMed:31198941, PubMed:31623377, PubMed:35975703). Prevents cortical microtubules organization into parallel arrays oriented perpendicular to the axis of cell elongation thus limiting anisotropic cell growth in the late phases of petal development (PubMed:31198941, PubMed:31623377, PubMed:35975703). Cooperatively with ANGUSTIFOLIA (AN), negatively regulates cortical microtubules (CMTs) organization in response to mechanical stress and modulates pavement cells morphogenesis leading to puzzle shape, probably in an AAA1/KTN1-dependent manner (PubMed:35975703).</text>
</comment>
<comment type="subunit">
    <text evidence="3 5">Associates to cortical microtubules via its N-terminal region (PubMed:31198941, PubMed:35975703). Interacts with ANGUSTIFOLIA (AN) on microtubule upon mechanical stress to regulate microtubule organization (PubMed:35975703). Binds to the microtubule-severing enzyme KATANIN (KTN1) (PubMed:35975703).</text>
</comment>
<comment type="subcellular location">
    <subcellularLocation>
        <location evidence="3 5">Cytoplasm</location>
        <location evidence="3 5">Cytoskeleton</location>
    </subcellularLocation>
    <subcellularLocation>
        <location evidence="5">Cytoplasm</location>
        <location evidence="5">Cytosol</location>
    </subcellularLocation>
    <subcellularLocation>
        <location evidence="5">Cell membrane</location>
        <topology evidence="7">Peripheral membrane protein</topology>
        <orientation evidence="7">Cytoplasmic side</orientation>
    </subcellularLocation>
    <text evidence="3 5">Colocalizes with cortical microtubules and binds directly to microtubules (PubMed:31198941, PubMed:35975703). In young pavement cells, observed as granules in the cytosol and at the cell periphery (PubMed:35975703). Formation to granules on microtubules is promoted by mechanical perturbations (PubMed:35975703).</text>
</comment>
<comment type="tissue specificity">
    <text evidence="3 5">Expressed ubiquitously at all development stages, with highest in developing petals (PubMed:31198941). During mechanical stress, accumulates in granules on microtubules (PubMed:35975703).</text>
</comment>
<comment type="developmental stage">
    <text evidence="3">Highest levels observed in petals during late developmental stages.</text>
</comment>
<comment type="disruption phenotype">
    <text evidence="3 4 5">Reduced interdigitated growth of pavement cells, with smooth shape (PubMed:35975703). Long and narrow petals and cotyledons, as well as increased anisotropic cell expansion of petal epidermis in the late phases of flower development, as a result of increased microtubule ordering in petal abaxial epidermal cells and in cotyledons pavement cells (PubMed:31198941, PubMed:31623377, PubMed:35975703). Enhanced cortical microtubules (CMTs) response to mechanical stress leading to aligned arrays (PubMed:35975703). The an-t1 ipga1-2 double mutant exhibits stronger phenotypes than single mutants in term of longer and narrower cotyledons and leaves (PubMed:35975703). The ipga1-2 ktn1-4 double mutant has an enhanced phenotype of pavement cells, resembling soap bubbles and no lobe formation (PubMed:35975703).</text>
</comment>
<comment type="similarity">
    <text evidence="7">Belongs to the IPGA1 family.</text>
</comment>
<comment type="sequence caution" evidence="7">
    <conflict type="erroneous gene model prediction">
        <sequence resource="EMBL-CDS" id="CAA16736"/>
    </conflict>
</comment>
<comment type="sequence caution" evidence="7">
    <conflict type="erroneous gene model prediction">
        <sequence resource="EMBL-CDS" id="CAB78858"/>
    </conflict>
</comment>
<dbReference type="EMBL" id="AL021710">
    <property type="protein sequence ID" value="CAA16736.1"/>
    <property type="status" value="ALT_SEQ"/>
    <property type="molecule type" value="Genomic_DNA"/>
</dbReference>
<dbReference type="EMBL" id="AL161549">
    <property type="protein sequence ID" value="CAB78858.1"/>
    <property type="status" value="ALT_SEQ"/>
    <property type="molecule type" value="Genomic_DNA"/>
</dbReference>
<dbReference type="EMBL" id="CP002687">
    <property type="protein sequence ID" value="AEE84061.1"/>
    <property type="molecule type" value="Genomic_DNA"/>
</dbReference>
<dbReference type="EMBL" id="AY128285">
    <property type="protein sequence ID" value="AAM91093.1"/>
    <property type="molecule type" value="mRNA"/>
</dbReference>
<dbReference type="EMBL" id="BT004523">
    <property type="protein sequence ID" value="AAO42769.1"/>
    <property type="molecule type" value="mRNA"/>
</dbReference>
<dbReference type="PIR" id="T04552">
    <property type="entry name" value="T04552"/>
</dbReference>
<dbReference type="RefSeq" id="NP_193591.2">
    <property type="nucleotide sequence ID" value="NM_117970.3"/>
</dbReference>
<dbReference type="SMR" id="Q8L7S5"/>
<dbReference type="FunCoup" id="Q8L7S5">
    <property type="interactions" value="743"/>
</dbReference>
<dbReference type="STRING" id="3702.Q8L7S5"/>
<dbReference type="iPTMnet" id="Q8L7S5"/>
<dbReference type="PaxDb" id="3702-AT4G18570.1"/>
<dbReference type="ProteomicsDB" id="181338"/>
<dbReference type="EnsemblPlants" id="AT4G18570.1">
    <property type="protein sequence ID" value="AT4G18570.1"/>
    <property type="gene ID" value="AT4G18570"/>
</dbReference>
<dbReference type="GeneID" id="827588"/>
<dbReference type="Gramene" id="AT4G18570.1">
    <property type="protein sequence ID" value="AT4G18570.1"/>
    <property type="gene ID" value="AT4G18570"/>
</dbReference>
<dbReference type="Araport" id="AT4G18570"/>
<dbReference type="TAIR" id="AT4G18570">
    <property type="gene designation" value="IPGA1"/>
</dbReference>
<dbReference type="eggNOG" id="ENOG502QS69">
    <property type="taxonomic scope" value="Eukaryota"/>
</dbReference>
<dbReference type="HOGENOM" id="CLU_014032_4_1_1"/>
<dbReference type="PRO" id="PR:Q8L7S5"/>
<dbReference type="Proteomes" id="UP000006548">
    <property type="component" value="Chromosome 4"/>
</dbReference>
<dbReference type="ExpressionAtlas" id="Q8L7S5">
    <property type="expression patterns" value="baseline and differential"/>
</dbReference>
<dbReference type="GO" id="GO:0071944">
    <property type="term" value="C:cell periphery"/>
    <property type="evidence" value="ECO:0000314"/>
    <property type="project" value="UniProtKB"/>
</dbReference>
<dbReference type="GO" id="GO:0055028">
    <property type="term" value="C:cortical microtubule"/>
    <property type="evidence" value="ECO:0000314"/>
    <property type="project" value="UniProtKB"/>
</dbReference>
<dbReference type="GO" id="GO:0005829">
    <property type="term" value="C:cytosol"/>
    <property type="evidence" value="ECO:0000314"/>
    <property type="project" value="UniProtKB"/>
</dbReference>
<dbReference type="GO" id="GO:0005874">
    <property type="term" value="C:microtubule"/>
    <property type="evidence" value="ECO:0000314"/>
    <property type="project" value="UniProtKB"/>
</dbReference>
<dbReference type="GO" id="GO:0005886">
    <property type="term" value="C:plasma membrane"/>
    <property type="evidence" value="ECO:0000314"/>
    <property type="project" value="UniProtKB"/>
</dbReference>
<dbReference type="GO" id="GO:0008017">
    <property type="term" value="F:microtubule binding"/>
    <property type="evidence" value="ECO:0000314"/>
    <property type="project" value="UniProtKB"/>
</dbReference>
<dbReference type="GO" id="GO:0051211">
    <property type="term" value="P:anisotropic cell growth"/>
    <property type="evidence" value="ECO:0000315"/>
    <property type="project" value="UniProtKB"/>
</dbReference>
<dbReference type="GO" id="GO:0071260">
    <property type="term" value="P:cellular response to mechanical stimulus"/>
    <property type="evidence" value="ECO:0000315"/>
    <property type="project" value="UniProtKB"/>
</dbReference>
<dbReference type="GO" id="GO:0043622">
    <property type="term" value="P:cortical microtubule organization"/>
    <property type="evidence" value="ECO:0000315"/>
    <property type="project" value="UniProtKB"/>
</dbReference>
<dbReference type="GO" id="GO:0048826">
    <property type="term" value="P:cotyledon morphogenesis"/>
    <property type="evidence" value="ECO:0000315"/>
    <property type="project" value="UniProtKB"/>
</dbReference>
<dbReference type="GO" id="GO:0090436">
    <property type="term" value="P:leaf pavement cell development"/>
    <property type="evidence" value="ECO:0000315"/>
    <property type="project" value="UniProtKB"/>
</dbReference>
<dbReference type="GO" id="GO:0048446">
    <property type="term" value="P:petal morphogenesis"/>
    <property type="evidence" value="ECO:0000315"/>
    <property type="project" value="UniProtKB"/>
</dbReference>
<dbReference type="GO" id="GO:0072699">
    <property type="term" value="P:protein localization to cortical microtubule cytoskeleton"/>
    <property type="evidence" value="ECO:0000315"/>
    <property type="project" value="UniProtKB"/>
</dbReference>
<dbReference type="InterPro" id="IPR040265">
    <property type="entry name" value="CHUP1/IPGA1-like"/>
</dbReference>
<dbReference type="PANTHER" id="PTHR31342:SF18">
    <property type="entry name" value="OS01G0651932 PROTEIN"/>
    <property type="match status" value="1"/>
</dbReference>
<dbReference type="PANTHER" id="PTHR31342">
    <property type="entry name" value="PROTEIN CHUP1, CHLOROPLASTIC"/>
    <property type="match status" value="1"/>
</dbReference>
<dbReference type="SUPFAM" id="SSF101447">
    <property type="entry name" value="Formin homology 2 domain (FH2 domain)"/>
    <property type="match status" value="1"/>
</dbReference>
<keyword id="KW-1003">Cell membrane</keyword>
<keyword id="KW-0175">Coiled coil</keyword>
<keyword id="KW-0963">Cytoplasm</keyword>
<keyword id="KW-0206">Cytoskeleton</keyword>
<keyword id="KW-0217">Developmental protein</keyword>
<keyword id="KW-0472">Membrane</keyword>
<keyword id="KW-0493">Microtubule</keyword>
<keyword id="KW-1185">Reference proteome</keyword>
<keyword id="KW-0346">Stress response</keyword>
<proteinExistence type="evidence at protein level"/>
<evidence type="ECO:0000255" key="1"/>
<evidence type="ECO:0000256" key="2">
    <source>
        <dbReference type="SAM" id="MobiDB-lite"/>
    </source>
</evidence>
<evidence type="ECO:0000269" key="3">
    <source>
    </source>
</evidence>
<evidence type="ECO:0000269" key="4">
    <source>
    </source>
</evidence>
<evidence type="ECO:0000269" key="5">
    <source>
    </source>
</evidence>
<evidence type="ECO:0000303" key="6">
    <source>
    </source>
</evidence>
<evidence type="ECO:0000305" key="7"/>
<evidence type="ECO:0000312" key="8">
    <source>
        <dbReference type="Araport" id="AT4G18570"/>
    </source>
</evidence>
<evidence type="ECO:0000312" key="9">
    <source>
        <dbReference type="EMBL" id="CAA16736.1"/>
    </source>
</evidence>
<accession>Q8L7S5</accession>
<accession>O49524</accession>